<gene>
    <name type="primary">yjbL</name>
    <name type="ordered locus">BSU11590</name>
</gene>
<evidence type="ECO:0000305" key="1"/>
<comment type="similarity">
    <text evidence="1">Belongs to the UPF0738 family.</text>
</comment>
<sequence length="122" mass="14059">MQNRIEILNATLSDDQLRLACQTEGNEAERKPSGQMLVDSDHFAFVYILELADSFEYVIIKEHVWPELKQAHAQKIPVVLEAGDQTIELAGLHEELEYLLENIKDNANYGEEMEEKVKRVFL</sequence>
<organism>
    <name type="scientific">Bacillus subtilis (strain 168)</name>
    <dbReference type="NCBI Taxonomy" id="224308"/>
    <lineage>
        <taxon>Bacteria</taxon>
        <taxon>Bacillati</taxon>
        <taxon>Bacillota</taxon>
        <taxon>Bacilli</taxon>
        <taxon>Bacillales</taxon>
        <taxon>Bacillaceae</taxon>
        <taxon>Bacillus</taxon>
    </lineage>
</organism>
<name>YJBL_BACSU</name>
<reference key="1">
    <citation type="journal article" date="1997" name="Nature">
        <title>The complete genome sequence of the Gram-positive bacterium Bacillus subtilis.</title>
        <authorList>
            <person name="Kunst F."/>
            <person name="Ogasawara N."/>
            <person name="Moszer I."/>
            <person name="Albertini A.M."/>
            <person name="Alloni G."/>
            <person name="Azevedo V."/>
            <person name="Bertero M.G."/>
            <person name="Bessieres P."/>
            <person name="Bolotin A."/>
            <person name="Borchert S."/>
            <person name="Borriss R."/>
            <person name="Boursier L."/>
            <person name="Brans A."/>
            <person name="Braun M."/>
            <person name="Brignell S.C."/>
            <person name="Bron S."/>
            <person name="Brouillet S."/>
            <person name="Bruschi C.V."/>
            <person name="Caldwell B."/>
            <person name="Capuano V."/>
            <person name="Carter N.M."/>
            <person name="Choi S.-K."/>
            <person name="Codani J.-J."/>
            <person name="Connerton I.F."/>
            <person name="Cummings N.J."/>
            <person name="Daniel R.A."/>
            <person name="Denizot F."/>
            <person name="Devine K.M."/>
            <person name="Duesterhoeft A."/>
            <person name="Ehrlich S.D."/>
            <person name="Emmerson P.T."/>
            <person name="Entian K.-D."/>
            <person name="Errington J."/>
            <person name="Fabret C."/>
            <person name="Ferrari E."/>
            <person name="Foulger D."/>
            <person name="Fritz C."/>
            <person name="Fujita M."/>
            <person name="Fujita Y."/>
            <person name="Fuma S."/>
            <person name="Galizzi A."/>
            <person name="Galleron N."/>
            <person name="Ghim S.-Y."/>
            <person name="Glaser P."/>
            <person name="Goffeau A."/>
            <person name="Golightly E.J."/>
            <person name="Grandi G."/>
            <person name="Guiseppi G."/>
            <person name="Guy B.J."/>
            <person name="Haga K."/>
            <person name="Haiech J."/>
            <person name="Harwood C.R."/>
            <person name="Henaut A."/>
            <person name="Hilbert H."/>
            <person name="Holsappel S."/>
            <person name="Hosono S."/>
            <person name="Hullo M.-F."/>
            <person name="Itaya M."/>
            <person name="Jones L.-M."/>
            <person name="Joris B."/>
            <person name="Karamata D."/>
            <person name="Kasahara Y."/>
            <person name="Klaerr-Blanchard M."/>
            <person name="Klein C."/>
            <person name="Kobayashi Y."/>
            <person name="Koetter P."/>
            <person name="Koningstein G."/>
            <person name="Krogh S."/>
            <person name="Kumano M."/>
            <person name="Kurita K."/>
            <person name="Lapidus A."/>
            <person name="Lardinois S."/>
            <person name="Lauber J."/>
            <person name="Lazarevic V."/>
            <person name="Lee S.-M."/>
            <person name="Levine A."/>
            <person name="Liu H."/>
            <person name="Masuda S."/>
            <person name="Mauel C."/>
            <person name="Medigue C."/>
            <person name="Medina N."/>
            <person name="Mellado R.P."/>
            <person name="Mizuno M."/>
            <person name="Moestl D."/>
            <person name="Nakai S."/>
            <person name="Noback M."/>
            <person name="Noone D."/>
            <person name="O'Reilly M."/>
            <person name="Ogawa K."/>
            <person name="Ogiwara A."/>
            <person name="Oudega B."/>
            <person name="Park S.-H."/>
            <person name="Parro V."/>
            <person name="Pohl T.M."/>
            <person name="Portetelle D."/>
            <person name="Porwollik S."/>
            <person name="Prescott A.M."/>
            <person name="Presecan E."/>
            <person name="Pujic P."/>
            <person name="Purnelle B."/>
            <person name="Rapoport G."/>
            <person name="Rey M."/>
            <person name="Reynolds S."/>
            <person name="Rieger M."/>
            <person name="Rivolta C."/>
            <person name="Rocha E."/>
            <person name="Roche B."/>
            <person name="Rose M."/>
            <person name="Sadaie Y."/>
            <person name="Sato T."/>
            <person name="Scanlan E."/>
            <person name="Schleich S."/>
            <person name="Schroeter R."/>
            <person name="Scoffone F."/>
            <person name="Sekiguchi J."/>
            <person name="Sekowska A."/>
            <person name="Seror S.J."/>
            <person name="Serror P."/>
            <person name="Shin B.-S."/>
            <person name="Soldo B."/>
            <person name="Sorokin A."/>
            <person name="Tacconi E."/>
            <person name="Takagi T."/>
            <person name="Takahashi H."/>
            <person name="Takemaru K."/>
            <person name="Takeuchi M."/>
            <person name="Tamakoshi A."/>
            <person name="Tanaka T."/>
            <person name="Terpstra P."/>
            <person name="Tognoni A."/>
            <person name="Tosato V."/>
            <person name="Uchiyama S."/>
            <person name="Vandenbol M."/>
            <person name="Vannier F."/>
            <person name="Vassarotti A."/>
            <person name="Viari A."/>
            <person name="Wambutt R."/>
            <person name="Wedler E."/>
            <person name="Wedler H."/>
            <person name="Weitzenegger T."/>
            <person name="Winters P."/>
            <person name="Wipat A."/>
            <person name="Yamamoto H."/>
            <person name="Yamane K."/>
            <person name="Yasumoto K."/>
            <person name="Yata K."/>
            <person name="Yoshida K."/>
            <person name="Yoshikawa H.-F."/>
            <person name="Zumstein E."/>
            <person name="Yoshikawa H."/>
            <person name="Danchin A."/>
        </authorList>
    </citation>
    <scope>NUCLEOTIDE SEQUENCE [LARGE SCALE GENOMIC DNA]</scope>
    <source>
        <strain>168</strain>
    </source>
</reference>
<feature type="chain" id="PRO_0000369650" description="UPF0738 protein YjbL">
    <location>
        <begin position="1"/>
        <end position="122"/>
    </location>
</feature>
<dbReference type="EMBL" id="AL009126">
    <property type="protein sequence ID" value="CAB13016.1"/>
    <property type="molecule type" value="Genomic_DNA"/>
</dbReference>
<dbReference type="PIR" id="D69844">
    <property type="entry name" value="D69844"/>
</dbReference>
<dbReference type="RefSeq" id="NP_389041.1">
    <property type="nucleotide sequence ID" value="NC_000964.3"/>
</dbReference>
<dbReference type="RefSeq" id="WP_003232922.1">
    <property type="nucleotide sequence ID" value="NZ_OZ025638.1"/>
</dbReference>
<dbReference type="FunCoup" id="O31610">
    <property type="interactions" value="50"/>
</dbReference>
<dbReference type="STRING" id="224308.BSU11590"/>
<dbReference type="jPOST" id="O31610"/>
<dbReference type="PaxDb" id="224308-BSU11590"/>
<dbReference type="EnsemblBacteria" id="CAB13016">
    <property type="protein sequence ID" value="CAB13016"/>
    <property type="gene ID" value="BSU_11590"/>
</dbReference>
<dbReference type="GeneID" id="939376"/>
<dbReference type="KEGG" id="bsu:BSU11590"/>
<dbReference type="PATRIC" id="fig|224308.179.peg.1248"/>
<dbReference type="eggNOG" id="ENOG5032YMN">
    <property type="taxonomic scope" value="Bacteria"/>
</dbReference>
<dbReference type="InParanoid" id="O31610"/>
<dbReference type="OrthoDB" id="2966478at2"/>
<dbReference type="BioCyc" id="BSUB:BSU11590-MONOMER"/>
<dbReference type="Proteomes" id="UP000001570">
    <property type="component" value="Chromosome"/>
</dbReference>
<dbReference type="HAMAP" id="MF_01861">
    <property type="entry name" value="UPF0738"/>
    <property type="match status" value="1"/>
</dbReference>
<dbReference type="InterPro" id="IPR020908">
    <property type="entry name" value="UPF0738"/>
</dbReference>
<dbReference type="Pfam" id="PF19785">
    <property type="entry name" value="UPF0738"/>
    <property type="match status" value="1"/>
</dbReference>
<proteinExistence type="inferred from homology"/>
<accession>O31610</accession>
<keyword id="KW-1185">Reference proteome</keyword>
<protein>
    <recommendedName>
        <fullName>UPF0738 protein YjbL</fullName>
    </recommendedName>
</protein>